<name>ATPG_OPITP</name>
<protein>
    <recommendedName>
        <fullName evidence="1">ATP synthase gamma chain</fullName>
    </recommendedName>
    <alternativeName>
        <fullName evidence="1">ATP synthase F1 sector gamma subunit</fullName>
    </alternativeName>
    <alternativeName>
        <fullName evidence="1">F-ATPase gamma subunit</fullName>
    </alternativeName>
</protein>
<feature type="chain" id="PRO_1000134184" description="ATP synthase gamma chain">
    <location>
        <begin position="1"/>
        <end position="294"/>
    </location>
</feature>
<dbReference type="EMBL" id="CP001032">
    <property type="protein sequence ID" value="ACB74164.1"/>
    <property type="molecule type" value="Genomic_DNA"/>
</dbReference>
<dbReference type="RefSeq" id="WP_012373702.1">
    <property type="nucleotide sequence ID" value="NC_010571.1"/>
</dbReference>
<dbReference type="SMR" id="B1ZWN7"/>
<dbReference type="STRING" id="452637.Oter_0876"/>
<dbReference type="KEGG" id="ote:Oter_0876"/>
<dbReference type="eggNOG" id="COG0224">
    <property type="taxonomic scope" value="Bacteria"/>
</dbReference>
<dbReference type="HOGENOM" id="CLU_050669_0_1_0"/>
<dbReference type="OrthoDB" id="9812769at2"/>
<dbReference type="Proteomes" id="UP000007013">
    <property type="component" value="Chromosome"/>
</dbReference>
<dbReference type="GO" id="GO:0005886">
    <property type="term" value="C:plasma membrane"/>
    <property type="evidence" value="ECO:0007669"/>
    <property type="project" value="UniProtKB-SubCell"/>
</dbReference>
<dbReference type="GO" id="GO:0045259">
    <property type="term" value="C:proton-transporting ATP synthase complex"/>
    <property type="evidence" value="ECO:0007669"/>
    <property type="project" value="UniProtKB-KW"/>
</dbReference>
<dbReference type="GO" id="GO:0005524">
    <property type="term" value="F:ATP binding"/>
    <property type="evidence" value="ECO:0007669"/>
    <property type="project" value="UniProtKB-UniRule"/>
</dbReference>
<dbReference type="GO" id="GO:0046933">
    <property type="term" value="F:proton-transporting ATP synthase activity, rotational mechanism"/>
    <property type="evidence" value="ECO:0007669"/>
    <property type="project" value="UniProtKB-UniRule"/>
</dbReference>
<dbReference type="GO" id="GO:0042777">
    <property type="term" value="P:proton motive force-driven plasma membrane ATP synthesis"/>
    <property type="evidence" value="ECO:0007669"/>
    <property type="project" value="UniProtKB-UniRule"/>
</dbReference>
<dbReference type="CDD" id="cd12151">
    <property type="entry name" value="F1-ATPase_gamma"/>
    <property type="match status" value="1"/>
</dbReference>
<dbReference type="FunFam" id="1.10.287.80:FF:000003">
    <property type="entry name" value="ATP synthase gamma chain, chloroplastic"/>
    <property type="match status" value="1"/>
</dbReference>
<dbReference type="Gene3D" id="3.40.1380.10">
    <property type="match status" value="1"/>
</dbReference>
<dbReference type="Gene3D" id="1.10.287.80">
    <property type="entry name" value="ATP synthase, gamma subunit, helix hairpin domain"/>
    <property type="match status" value="1"/>
</dbReference>
<dbReference type="HAMAP" id="MF_00815">
    <property type="entry name" value="ATP_synth_gamma_bact"/>
    <property type="match status" value="1"/>
</dbReference>
<dbReference type="InterPro" id="IPR035968">
    <property type="entry name" value="ATP_synth_F1_ATPase_gsu"/>
</dbReference>
<dbReference type="InterPro" id="IPR000131">
    <property type="entry name" value="ATP_synth_F1_gsu"/>
</dbReference>
<dbReference type="NCBIfam" id="TIGR01146">
    <property type="entry name" value="ATPsyn_F1gamma"/>
    <property type="match status" value="1"/>
</dbReference>
<dbReference type="PANTHER" id="PTHR11693">
    <property type="entry name" value="ATP SYNTHASE GAMMA CHAIN"/>
    <property type="match status" value="1"/>
</dbReference>
<dbReference type="PANTHER" id="PTHR11693:SF22">
    <property type="entry name" value="ATP SYNTHASE SUBUNIT GAMMA, MITOCHONDRIAL"/>
    <property type="match status" value="1"/>
</dbReference>
<dbReference type="Pfam" id="PF00231">
    <property type="entry name" value="ATP-synt"/>
    <property type="match status" value="1"/>
</dbReference>
<dbReference type="PRINTS" id="PR00126">
    <property type="entry name" value="ATPASEGAMMA"/>
</dbReference>
<dbReference type="SUPFAM" id="SSF52943">
    <property type="entry name" value="ATP synthase (F1-ATPase), gamma subunit"/>
    <property type="match status" value="1"/>
</dbReference>
<comment type="function">
    <text evidence="1">Produces ATP from ADP in the presence of a proton gradient across the membrane. The gamma chain is believed to be important in regulating ATPase activity and the flow of protons through the CF(0) complex.</text>
</comment>
<comment type="subunit">
    <text evidence="1">F-type ATPases have 2 components, CF(1) - the catalytic core - and CF(0) - the membrane proton channel. CF(1) has five subunits: alpha(3), beta(3), gamma(1), delta(1), epsilon(1). CF(0) has three main subunits: a, b and c.</text>
</comment>
<comment type="subcellular location">
    <subcellularLocation>
        <location evidence="1">Cell membrane</location>
        <topology evidence="1">Peripheral membrane protein</topology>
    </subcellularLocation>
</comment>
<comment type="similarity">
    <text evidence="1">Belongs to the ATPase gamma chain family.</text>
</comment>
<proteinExistence type="inferred from homology"/>
<organism>
    <name type="scientific">Opitutus terrae (strain DSM 11246 / JCM 15787 / PB90-1)</name>
    <dbReference type="NCBI Taxonomy" id="452637"/>
    <lineage>
        <taxon>Bacteria</taxon>
        <taxon>Pseudomonadati</taxon>
        <taxon>Verrucomicrobiota</taxon>
        <taxon>Opitutia</taxon>
        <taxon>Opitutales</taxon>
        <taxon>Opitutaceae</taxon>
        <taxon>Opitutus</taxon>
    </lineage>
</organism>
<keyword id="KW-0066">ATP synthesis</keyword>
<keyword id="KW-1003">Cell membrane</keyword>
<keyword id="KW-0139">CF(1)</keyword>
<keyword id="KW-0375">Hydrogen ion transport</keyword>
<keyword id="KW-0406">Ion transport</keyword>
<keyword id="KW-0472">Membrane</keyword>
<keyword id="KW-1185">Reference proteome</keyword>
<keyword id="KW-0813">Transport</keyword>
<evidence type="ECO:0000255" key="1">
    <source>
        <dbReference type="HAMAP-Rule" id="MF_00815"/>
    </source>
</evidence>
<sequence>MASTRDIRRRIKSVKNTRQITKAMELVAASKMKKAQQAAVAGRPYAELMAQMLATLGDRVEEAQHPFLVQREVKTRGIILITTDKGLAGPLNANLFKLVTDIQSPAKYVVVGRKGAQFIARTRRDLLAEFQVSDRAAFAEVKVVVEFMTKQFIDGVVDSVEVIWPRFKNTLVQIPTIAQLLPLRGVQHAVESLQHGTGVSAPRSPAVEAQMLFEPDPVSVLSALLPLYINREVYHQVLDAKASEHSARMVAMKTAKDNATKLLDDLTLEYNKARQAGITQEIIEIAAAQFAAAS</sequence>
<reference key="1">
    <citation type="journal article" date="2011" name="J. Bacteriol.">
        <title>Genome sequence of the verrucomicrobium Opitutus terrae PB90-1, an abundant inhabitant of rice paddy soil ecosystems.</title>
        <authorList>
            <person name="van Passel M.W."/>
            <person name="Kant R."/>
            <person name="Palva A."/>
            <person name="Copeland A."/>
            <person name="Lucas S."/>
            <person name="Lapidus A."/>
            <person name="Glavina del Rio T."/>
            <person name="Pitluck S."/>
            <person name="Goltsman E."/>
            <person name="Clum A."/>
            <person name="Sun H."/>
            <person name="Schmutz J."/>
            <person name="Larimer F.W."/>
            <person name="Land M.L."/>
            <person name="Hauser L."/>
            <person name="Kyrpides N."/>
            <person name="Mikhailova N."/>
            <person name="Richardson P.P."/>
            <person name="Janssen P.H."/>
            <person name="de Vos W.M."/>
            <person name="Smidt H."/>
        </authorList>
    </citation>
    <scope>NUCLEOTIDE SEQUENCE [LARGE SCALE GENOMIC DNA]</scope>
    <source>
        <strain>DSM 11246 / JCM 15787 / PB90-1</strain>
    </source>
</reference>
<accession>B1ZWN7</accession>
<gene>
    <name evidence="1" type="primary">atpG</name>
    <name type="ordered locus">Oter_0876</name>
</gene>